<evidence type="ECO:0000255" key="1">
    <source>
        <dbReference type="HAMAP-Rule" id="MF_00815"/>
    </source>
</evidence>
<gene>
    <name evidence="1" type="primary">atpG</name>
    <name type="ordered locus">BCA_5451</name>
</gene>
<organism>
    <name type="scientific">Bacillus cereus (strain 03BB102)</name>
    <dbReference type="NCBI Taxonomy" id="572264"/>
    <lineage>
        <taxon>Bacteria</taxon>
        <taxon>Bacillati</taxon>
        <taxon>Bacillota</taxon>
        <taxon>Bacilli</taxon>
        <taxon>Bacillales</taxon>
        <taxon>Bacillaceae</taxon>
        <taxon>Bacillus</taxon>
        <taxon>Bacillus cereus group</taxon>
    </lineage>
</organism>
<comment type="function">
    <text evidence="1">Produces ATP from ADP in the presence of a proton gradient across the membrane. The gamma chain is believed to be important in regulating ATPase activity and the flow of protons through the CF(0) complex.</text>
</comment>
<comment type="subunit">
    <text evidence="1">F-type ATPases have 2 components, CF(1) - the catalytic core - and CF(0) - the membrane proton channel. CF(1) has five subunits: alpha(3), beta(3), gamma(1), delta(1), epsilon(1). CF(0) has three main subunits: a, b and c.</text>
</comment>
<comment type="subcellular location">
    <subcellularLocation>
        <location evidence="1">Cell membrane</location>
        <topology evidence="1">Peripheral membrane protein</topology>
    </subcellularLocation>
</comment>
<comment type="similarity">
    <text evidence="1">Belongs to the ATPase gamma chain family.</text>
</comment>
<proteinExistence type="inferred from homology"/>
<dbReference type="EMBL" id="CP001407">
    <property type="protein sequence ID" value="ACO26767.1"/>
    <property type="molecule type" value="Genomic_DNA"/>
</dbReference>
<dbReference type="RefSeq" id="WP_000157696.1">
    <property type="nucleotide sequence ID" value="NZ_CP009318.1"/>
</dbReference>
<dbReference type="SMR" id="C1F0M9"/>
<dbReference type="GeneID" id="93005817"/>
<dbReference type="KEGG" id="bcx:BCA_5451"/>
<dbReference type="PATRIC" id="fig|572264.18.peg.5373"/>
<dbReference type="Proteomes" id="UP000002210">
    <property type="component" value="Chromosome"/>
</dbReference>
<dbReference type="GO" id="GO:0005886">
    <property type="term" value="C:plasma membrane"/>
    <property type="evidence" value="ECO:0007669"/>
    <property type="project" value="UniProtKB-SubCell"/>
</dbReference>
<dbReference type="GO" id="GO:0045259">
    <property type="term" value="C:proton-transporting ATP synthase complex"/>
    <property type="evidence" value="ECO:0007669"/>
    <property type="project" value="UniProtKB-KW"/>
</dbReference>
<dbReference type="GO" id="GO:0005524">
    <property type="term" value="F:ATP binding"/>
    <property type="evidence" value="ECO:0007669"/>
    <property type="project" value="UniProtKB-UniRule"/>
</dbReference>
<dbReference type="GO" id="GO:0046933">
    <property type="term" value="F:proton-transporting ATP synthase activity, rotational mechanism"/>
    <property type="evidence" value="ECO:0007669"/>
    <property type="project" value="UniProtKB-UniRule"/>
</dbReference>
<dbReference type="GO" id="GO:0042777">
    <property type="term" value="P:proton motive force-driven plasma membrane ATP synthesis"/>
    <property type="evidence" value="ECO:0007669"/>
    <property type="project" value="UniProtKB-UniRule"/>
</dbReference>
<dbReference type="CDD" id="cd12151">
    <property type="entry name" value="F1-ATPase_gamma"/>
    <property type="match status" value="1"/>
</dbReference>
<dbReference type="FunFam" id="3.40.1380.10:FF:000002">
    <property type="entry name" value="ATP synthase gamma chain"/>
    <property type="match status" value="1"/>
</dbReference>
<dbReference type="Gene3D" id="3.40.1380.10">
    <property type="match status" value="1"/>
</dbReference>
<dbReference type="Gene3D" id="1.10.287.80">
    <property type="entry name" value="ATP synthase, gamma subunit, helix hairpin domain"/>
    <property type="match status" value="1"/>
</dbReference>
<dbReference type="HAMAP" id="MF_00815">
    <property type="entry name" value="ATP_synth_gamma_bact"/>
    <property type="match status" value="1"/>
</dbReference>
<dbReference type="InterPro" id="IPR035968">
    <property type="entry name" value="ATP_synth_F1_ATPase_gsu"/>
</dbReference>
<dbReference type="InterPro" id="IPR000131">
    <property type="entry name" value="ATP_synth_F1_gsu"/>
</dbReference>
<dbReference type="InterPro" id="IPR023632">
    <property type="entry name" value="ATP_synth_F1_gsu_CS"/>
</dbReference>
<dbReference type="NCBIfam" id="TIGR01146">
    <property type="entry name" value="ATPsyn_F1gamma"/>
    <property type="match status" value="1"/>
</dbReference>
<dbReference type="PANTHER" id="PTHR11693">
    <property type="entry name" value="ATP SYNTHASE GAMMA CHAIN"/>
    <property type="match status" value="1"/>
</dbReference>
<dbReference type="PANTHER" id="PTHR11693:SF22">
    <property type="entry name" value="ATP SYNTHASE SUBUNIT GAMMA, MITOCHONDRIAL"/>
    <property type="match status" value="1"/>
</dbReference>
<dbReference type="Pfam" id="PF00231">
    <property type="entry name" value="ATP-synt"/>
    <property type="match status" value="1"/>
</dbReference>
<dbReference type="PRINTS" id="PR00126">
    <property type="entry name" value="ATPASEGAMMA"/>
</dbReference>
<dbReference type="SUPFAM" id="SSF52943">
    <property type="entry name" value="ATP synthase (F1-ATPase), gamma subunit"/>
    <property type="match status" value="1"/>
</dbReference>
<dbReference type="PROSITE" id="PS00153">
    <property type="entry name" value="ATPASE_GAMMA"/>
    <property type="match status" value="1"/>
</dbReference>
<reference key="1">
    <citation type="submission" date="2009-02" db="EMBL/GenBank/DDBJ databases">
        <title>Genome sequence of Bacillus cereus 03BB102.</title>
        <authorList>
            <person name="Dodson R.J."/>
            <person name="Jackson P."/>
            <person name="Munk A.C."/>
            <person name="Brettin T."/>
            <person name="Bruce D."/>
            <person name="Detter C."/>
            <person name="Tapia R."/>
            <person name="Han C."/>
            <person name="Sutton G."/>
            <person name="Sims D."/>
        </authorList>
    </citation>
    <scope>NUCLEOTIDE SEQUENCE [LARGE SCALE GENOMIC DNA]</scope>
    <source>
        <strain>03BB102</strain>
    </source>
</reference>
<name>ATPG_BACC3</name>
<sequence>MASLRDIKAKINSTKKTSQITKAMEMVSASKLNRAEQNAKSFVPYMEKIQEVVASIAQGSKGINHPMLNARPVKRTGYIVITSDRGLAGGYNSNVLRTVSNVIRERHNMDSNQYSIIVLGRLGRDYLKRRGFNIIDEVVGLSDHPSFTDIKDLASRAIAMFADGAYDELYIYYNHYVSKISQEVTENKILPLTDVASDKPTTAYEFEPSEEEILKVLLPQYAESLVYGALLDGKASEHAARMTAMKSATDNAMEVIDSLTLSFNRARQAAITQEITEIVGGAAALE</sequence>
<feature type="chain" id="PRO_1000148600" description="ATP synthase gamma chain">
    <location>
        <begin position="1"/>
        <end position="286"/>
    </location>
</feature>
<protein>
    <recommendedName>
        <fullName evidence="1">ATP synthase gamma chain</fullName>
    </recommendedName>
    <alternativeName>
        <fullName evidence="1">ATP synthase F1 sector gamma subunit</fullName>
    </alternativeName>
    <alternativeName>
        <fullName evidence="1">F-ATPase gamma subunit</fullName>
    </alternativeName>
</protein>
<accession>C1F0M9</accession>
<keyword id="KW-0066">ATP synthesis</keyword>
<keyword id="KW-1003">Cell membrane</keyword>
<keyword id="KW-0139">CF(1)</keyword>
<keyword id="KW-0375">Hydrogen ion transport</keyword>
<keyword id="KW-0406">Ion transport</keyword>
<keyword id="KW-0472">Membrane</keyword>
<keyword id="KW-0813">Transport</keyword>